<dbReference type="EC" id="1.1.1.34"/>
<dbReference type="EMBL" id="AAFI02000016">
    <property type="protein sequence ID" value="EAL69120.1"/>
    <property type="molecule type" value="Genomic_DNA"/>
</dbReference>
<dbReference type="EMBL" id="L19350">
    <property type="protein sequence ID" value="AAA33215.1"/>
    <property type="molecule type" value="mRNA"/>
</dbReference>
<dbReference type="RefSeq" id="XP_643058.1">
    <property type="nucleotide sequence ID" value="XM_637966.1"/>
</dbReference>
<dbReference type="SMR" id="P34136"/>
<dbReference type="FunCoup" id="P34136">
    <property type="interactions" value="26"/>
</dbReference>
<dbReference type="STRING" id="44689.P34136"/>
<dbReference type="PaxDb" id="44689-DDB0215357"/>
<dbReference type="EnsemblProtists" id="EAL69120">
    <property type="protein sequence ID" value="EAL69120"/>
    <property type="gene ID" value="DDB_G0276615"/>
</dbReference>
<dbReference type="GeneID" id="8620599"/>
<dbReference type="KEGG" id="ddi:DDB_G0276615"/>
<dbReference type="dictyBase" id="DDB_G0276615">
    <property type="gene designation" value="hmgB"/>
</dbReference>
<dbReference type="VEuPathDB" id="AmoebaDB:DDB_G0276615"/>
<dbReference type="eggNOG" id="KOG2480">
    <property type="taxonomic scope" value="Eukaryota"/>
</dbReference>
<dbReference type="HOGENOM" id="CLU_001734_2_0_1"/>
<dbReference type="InParanoid" id="P34136"/>
<dbReference type="OMA" id="VGRNIEN"/>
<dbReference type="PhylomeDB" id="P34136"/>
<dbReference type="UniPathway" id="UPA00058">
    <property type="reaction ID" value="UER00103"/>
</dbReference>
<dbReference type="PRO" id="PR:P34136"/>
<dbReference type="Proteomes" id="UP000002195">
    <property type="component" value="Chromosome 2"/>
</dbReference>
<dbReference type="GO" id="GO:0005789">
    <property type="term" value="C:endoplasmic reticulum membrane"/>
    <property type="evidence" value="ECO:0000318"/>
    <property type="project" value="GO_Central"/>
</dbReference>
<dbReference type="GO" id="GO:0005778">
    <property type="term" value="C:peroxisomal membrane"/>
    <property type="evidence" value="ECO:0000318"/>
    <property type="project" value="GO_Central"/>
</dbReference>
<dbReference type="GO" id="GO:0004420">
    <property type="term" value="F:hydroxymethylglutaryl-CoA reductase (NADPH) activity"/>
    <property type="evidence" value="ECO:0000318"/>
    <property type="project" value="GO_Central"/>
</dbReference>
<dbReference type="GO" id="GO:0006695">
    <property type="term" value="P:cholesterol biosynthetic process"/>
    <property type="evidence" value="ECO:0007669"/>
    <property type="project" value="UniProtKB-KW"/>
</dbReference>
<dbReference type="GO" id="GO:0015936">
    <property type="term" value="P:coenzyme A metabolic process"/>
    <property type="evidence" value="ECO:0007669"/>
    <property type="project" value="InterPro"/>
</dbReference>
<dbReference type="GO" id="GO:0008299">
    <property type="term" value="P:isoprenoid biosynthetic process"/>
    <property type="evidence" value="ECO:0000318"/>
    <property type="project" value="GO_Central"/>
</dbReference>
<dbReference type="GO" id="GO:0016126">
    <property type="term" value="P:sterol biosynthetic process"/>
    <property type="evidence" value="ECO:0000318"/>
    <property type="project" value="GO_Central"/>
</dbReference>
<dbReference type="CDD" id="cd00643">
    <property type="entry name" value="HMG-CoA_reductase_classI"/>
    <property type="match status" value="1"/>
</dbReference>
<dbReference type="FunFam" id="3.30.70.420:FF:000001">
    <property type="entry name" value="3-hydroxy-3-methylglutaryl coenzyme A reductase"/>
    <property type="match status" value="1"/>
</dbReference>
<dbReference type="FunFam" id="3.90.770.10:FF:000002">
    <property type="entry name" value="3-hydroxy-3-methylglutaryl coenzyme A reductase"/>
    <property type="match status" value="1"/>
</dbReference>
<dbReference type="Gene3D" id="3.90.770.10">
    <property type="entry name" value="3-hydroxy-3-methylglutaryl-coenzyme A Reductase, Chain A, domain 2"/>
    <property type="match status" value="1"/>
</dbReference>
<dbReference type="Gene3D" id="1.10.3270.10">
    <property type="entry name" value="HMGR, N-terminal domain"/>
    <property type="match status" value="1"/>
</dbReference>
<dbReference type="Gene3D" id="3.30.70.420">
    <property type="entry name" value="Hydroxymethylglutaryl-CoA reductase, class I/II, NAD/NADP-binding domain"/>
    <property type="match status" value="1"/>
</dbReference>
<dbReference type="InterPro" id="IPR002202">
    <property type="entry name" value="HMG_CoA_Rdtase"/>
</dbReference>
<dbReference type="InterPro" id="IPR023074">
    <property type="entry name" value="HMG_CoA_Rdtase_cat_sf"/>
</dbReference>
<dbReference type="InterPro" id="IPR023076">
    <property type="entry name" value="HMG_CoA_Rdtase_CS"/>
</dbReference>
<dbReference type="InterPro" id="IPR004554">
    <property type="entry name" value="HMG_CoA_Rdtase_eu_arc"/>
</dbReference>
<dbReference type="InterPro" id="IPR023282">
    <property type="entry name" value="HMG_CoA_Rdtase_N"/>
</dbReference>
<dbReference type="InterPro" id="IPR009023">
    <property type="entry name" value="HMG_CoA_Rdtase_NAD(P)-bd_sf"/>
</dbReference>
<dbReference type="InterPro" id="IPR009029">
    <property type="entry name" value="HMG_CoA_Rdtase_sub-bd_dom_sf"/>
</dbReference>
<dbReference type="NCBIfam" id="TIGR00533">
    <property type="entry name" value="HMG_CoA_R_NADP"/>
    <property type="match status" value="1"/>
</dbReference>
<dbReference type="PANTHER" id="PTHR10572">
    <property type="entry name" value="3-HYDROXY-3-METHYLGLUTARYL-COENZYME A REDUCTASE"/>
    <property type="match status" value="1"/>
</dbReference>
<dbReference type="PANTHER" id="PTHR10572:SF24">
    <property type="entry name" value="3-HYDROXY-3-METHYLGLUTARYL-COENZYME A REDUCTASE"/>
    <property type="match status" value="1"/>
</dbReference>
<dbReference type="Pfam" id="PF00368">
    <property type="entry name" value="HMG-CoA_red"/>
    <property type="match status" value="1"/>
</dbReference>
<dbReference type="PRINTS" id="PR00071">
    <property type="entry name" value="HMGCOARDTASE"/>
</dbReference>
<dbReference type="SUPFAM" id="SSF55035">
    <property type="entry name" value="NAD-binding domain of HMG-CoA reductase"/>
    <property type="match status" value="1"/>
</dbReference>
<dbReference type="SUPFAM" id="SSF56542">
    <property type="entry name" value="Substrate-binding domain of HMG-CoA reductase"/>
    <property type="match status" value="1"/>
</dbReference>
<dbReference type="PROSITE" id="PS00066">
    <property type="entry name" value="HMG_COA_REDUCTASE_1"/>
    <property type="match status" value="1"/>
</dbReference>
<dbReference type="PROSITE" id="PS00318">
    <property type="entry name" value="HMG_COA_REDUCTASE_2"/>
    <property type="match status" value="1"/>
</dbReference>
<dbReference type="PROSITE" id="PS01192">
    <property type="entry name" value="HMG_COA_REDUCTASE_3"/>
    <property type="match status" value="1"/>
</dbReference>
<dbReference type="PROSITE" id="PS50065">
    <property type="entry name" value="HMG_COA_REDUCTASE_4"/>
    <property type="match status" value="1"/>
</dbReference>
<feature type="chain" id="PRO_0000114428" description="3-hydroxy-3-methylglutaryl-coenzyme A reductase 2">
    <location>
        <begin position="1"/>
        <end position="526"/>
    </location>
</feature>
<feature type="region of interest" description="Disordered" evidence="3">
    <location>
        <begin position="503"/>
        <end position="526"/>
    </location>
</feature>
<feature type="compositionally biased region" description="Polar residues" evidence="3">
    <location>
        <begin position="514"/>
        <end position="526"/>
    </location>
</feature>
<feature type="active site" description="Charge relay system" evidence="1">
    <location>
        <position position="193"/>
    </location>
</feature>
<feature type="active site" description="Charge relay system" evidence="1">
    <location>
        <position position="325"/>
    </location>
</feature>
<feature type="active site" description="Charge relay system" evidence="1">
    <location>
        <position position="401"/>
    </location>
</feature>
<feature type="active site" description="Proton donor" evidence="2">
    <location>
        <position position="499"/>
    </location>
</feature>
<evidence type="ECO:0000250" key="1"/>
<evidence type="ECO:0000255" key="2">
    <source>
        <dbReference type="PROSITE-ProRule" id="PRU10003"/>
    </source>
</evidence>
<evidence type="ECO:0000256" key="3">
    <source>
        <dbReference type="SAM" id="MobiDB-lite"/>
    </source>
</evidence>
<evidence type="ECO:0000305" key="4"/>
<keyword id="KW-0152">Cholesterol biosynthesis</keyword>
<keyword id="KW-0153">Cholesterol metabolism</keyword>
<keyword id="KW-0444">Lipid biosynthesis</keyword>
<keyword id="KW-0443">Lipid metabolism</keyword>
<keyword id="KW-0521">NADP</keyword>
<keyword id="KW-0560">Oxidoreductase</keyword>
<keyword id="KW-1185">Reference proteome</keyword>
<keyword id="KW-0752">Steroid biosynthesis</keyword>
<keyword id="KW-0753">Steroid metabolism</keyword>
<keyword id="KW-0756">Sterol biosynthesis</keyword>
<keyword id="KW-1207">Sterol metabolism</keyword>
<accession>P34136</accession>
<accession>Q551D5</accession>
<protein>
    <recommendedName>
        <fullName>3-hydroxy-3-methylglutaryl-coenzyme A reductase 2</fullName>
        <shortName>HMG-CoA reductase 2</shortName>
        <ecNumber>1.1.1.34</ecNumber>
    </recommendedName>
</protein>
<organism>
    <name type="scientific">Dictyostelium discoideum</name>
    <name type="common">Social amoeba</name>
    <dbReference type="NCBI Taxonomy" id="44689"/>
    <lineage>
        <taxon>Eukaryota</taxon>
        <taxon>Amoebozoa</taxon>
        <taxon>Evosea</taxon>
        <taxon>Eumycetozoa</taxon>
        <taxon>Dictyostelia</taxon>
        <taxon>Dictyosteliales</taxon>
        <taxon>Dictyosteliaceae</taxon>
        <taxon>Dictyostelium</taxon>
    </lineage>
</organism>
<name>HMDH2_DICDI</name>
<proteinExistence type="evidence at transcript level"/>
<reference key="1">
    <citation type="journal article" date="2002" name="Nature">
        <title>Sequence and analysis of chromosome 2 of Dictyostelium discoideum.</title>
        <authorList>
            <person name="Gloeckner G."/>
            <person name="Eichinger L."/>
            <person name="Szafranski K."/>
            <person name="Pachebat J.A."/>
            <person name="Bankier A.T."/>
            <person name="Dear P.H."/>
            <person name="Lehmann R."/>
            <person name="Baumgart C."/>
            <person name="Parra G."/>
            <person name="Abril J.F."/>
            <person name="Guigo R."/>
            <person name="Kumpf K."/>
            <person name="Tunggal B."/>
            <person name="Cox E.C."/>
            <person name="Quail M.A."/>
            <person name="Platzer M."/>
            <person name="Rosenthal A."/>
            <person name="Noegel A.A."/>
        </authorList>
    </citation>
    <scope>NUCLEOTIDE SEQUENCE [LARGE SCALE GENOMIC DNA]</scope>
    <source>
        <strain>AX4</strain>
    </source>
</reference>
<reference key="2">
    <citation type="journal article" date="2005" name="Nature">
        <title>The genome of the social amoeba Dictyostelium discoideum.</title>
        <authorList>
            <person name="Eichinger L."/>
            <person name="Pachebat J.A."/>
            <person name="Gloeckner G."/>
            <person name="Rajandream M.A."/>
            <person name="Sucgang R."/>
            <person name="Berriman M."/>
            <person name="Song J."/>
            <person name="Olsen R."/>
            <person name="Szafranski K."/>
            <person name="Xu Q."/>
            <person name="Tunggal B."/>
            <person name="Kummerfeld S."/>
            <person name="Madera M."/>
            <person name="Konfortov B.A."/>
            <person name="Rivero F."/>
            <person name="Bankier A.T."/>
            <person name="Lehmann R."/>
            <person name="Hamlin N."/>
            <person name="Davies R."/>
            <person name="Gaudet P."/>
            <person name="Fey P."/>
            <person name="Pilcher K."/>
            <person name="Chen G."/>
            <person name="Saunders D."/>
            <person name="Sodergren E.J."/>
            <person name="Davis P."/>
            <person name="Kerhornou A."/>
            <person name="Nie X."/>
            <person name="Hall N."/>
            <person name="Anjard C."/>
            <person name="Hemphill L."/>
            <person name="Bason N."/>
            <person name="Farbrother P."/>
            <person name="Desany B."/>
            <person name="Just E."/>
            <person name="Morio T."/>
            <person name="Rost R."/>
            <person name="Churcher C.M."/>
            <person name="Cooper J."/>
            <person name="Haydock S."/>
            <person name="van Driessche N."/>
            <person name="Cronin A."/>
            <person name="Goodhead I."/>
            <person name="Muzny D.M."/>
            <person name="Mourier T."/>
            <person name="Pain A."/>
            <person name="Lu M."/>
            <person name="Harper D."/>
            <person name="Lindsay R."/>
            <person name="Hauser H."/>
            <person name="James K.D."/>
            <person name="Quiles M."/>
            <person name="Madan Babu M."/>
            <person name="Saito T."/>
            <person name="Buchrieser C."/>
            <person name="Wardroper A."/>
            <person name="Felder M."/>
            <person name="Thangavelu M."/>
            <person name="Johnson D."/>
            <person name="Knights A."/>
            <person name="Loulseged H."/>
            <person name="Mungall K.L."/>
            <person name="Oliver K."/>
            <person name="Price C."/>
            <person name="Quail M.A."/>
            <person name="Urushihara H."/>
            <person name="Hernandez J."/>
            <person name="Rabbinowitsch E."/>
            <person name="Steffen D."/>
            <person name="Sanders M."/>
            <person name="Ma J."/>
            <person name="Kohara Y."/>
            <person name="Sharp S."/>
            <person name="Simmonds M.N."/>
            <person name="Spiegler S."/>
            <person name="Tivey A."/>
            <person name="Sugano S."/>
            <person name="White B."/>
            <person name="Walker D."/>
            <person name="Woodward J.R."/>
            <person name="Winckler T."/>
            <person name="Tanaka Y."/>
            <person name="Shaulsky G."/>
            <person name="Schleicher M."/>
            <person name="Weinstock G.M."/>
            <person name="Rosenthal A."/>
            <person name="Cox E.C."/>
            <person name="Chisholm R.L."/>
            <person name="Gibbs R.A."/>
            <person name="Loomis W.F."/>
            <person name="Platzer M."/>
            <person name="Kay R.R."/>
            <person name="Williams J.G."/>
            <person name="Dear P.H."/>
            <person name="Noegel A.A."/>
            <person name="Barrell B.G."/>
            <person name="Kuspa A."/>
        </authorList>
    </citation>
    <scope>NUCLEOTIDE SEQUENCE [LARGE SCALE GENOMIC DNA]</scope>
    <source>
        <strain>AX4</strain>
    </source>
</reference>
<reference key="3">
    <citation type="submission" date="1993-06" db="EMBL/GenBank/DDBJ databases">
        <title>The dictyostelium HMGCoA reductase genes.</title>
        <authorList>
            <person name="De Lozanne A."/>
        </authorList>
    </citation>
    <scope>NUCLEOTIDE SEQUENCE [MRNA] OF 46-526</scope>
    <source>
        <strain>AX3</strain>
    </source>
</reference>
<gene>
    <name type="primary">hmgB</name>
    <name type="ORF">DDB_G0276615</name>
</gene>
<sequence>MIRIGSNLIKQSIKNTNKSGISRFFTTGSNNSTNYKPESCVKEEPKGKSVNVEDLKDQEIIALVDKGEIQPHNLETRLPNNFQRAVHIRRKLLARDLQKEHQRALHAQAVVAAAEKAATSGEDPSSIQPVVPPTSNLDFEGSLTNLPVDHFDYTKVLGACCENVIGYIPIPVGVAGPILLDGKLVSIPMATTEGCLVASTHRGAKAITKSGGAKTVLLQSGMTRAPVCRLPSSIRAGELKQWIENQENFYQVASAFNSTSRFARLKSIKVVIAGRLVYLRFKSSTGDAMGMNMVSKGVEKALEVITEYFPEMEVLSLSGNVCTDKKPSSINWLEGRGKSVVAEAVISGDIVRDVLKTTVEALVSLNIDKNLIGSAMAGSIGGFNAHASNIVTALYIATGQDPAQNVESSNCITLMESINGGKDLYISVTMPSIEVGTVGGGTHLPAQSACLDLLKIRGANLERPGANSEQLARVVAAAVLSGELSLMSALAAGHLVRSHLKHNRKTEAPAPQADTISMTHNLPHSD</sequence>
<comment type="function">
    <text>This transmembrane glycoprotein is involved in the control of cholesterol biosynthesis. It is the rate-limiting enzyme of the sterol biosynthesis.</text>
</comment>
<comment type="catalytic activity">
    <reaction evidence="2">
        <text>(R)-mevalonate + 2 NADP(+) + CoA = (3S)-3-hydroxy-3-methylglutaryl-CoA + 2 NADPH + 2 H(+)</text>
        <dbReference type="Rhea" id="RHEA:15989"/>
        <dbReference type="ChEBI" id="CHEBI:15378"/>
        <dbReference type="ChEBI" id="CHEBI:36464"/>
        <dbReference type="ChEBI" id="CHEBI:43074"/>
        <dbReference type="ChEBI" id="CHEBI:57287"/>
        <dbReference type="ChEBI" id="CHEBI:57783"/>
        <dbReference type="ChEBI" id="CHEBI:58349"/>
        <dbReference type="EC" id="1.1.1.34"/>
    </reaction>
</comment>
<comment type="pathway">
    <text>Metabolic intermediate biosynthesis; (R)-mevalonate biosynthesis; (R)-mevalonate from acetyl-CoA: step 3/3.</text>
</comment>
<comment type="similarity">
    <text evidence="4">Belongs to the HMG-CoA reductase family.</text>
</comment>